<organism>
    <name type="scientific">Oryza sativa subsp. japonica</name>
    <name type="common">Rice</name>
    <dbReference type="NCBI Taxonomy" id="39947"/>
    <lineage>
        <taxon>Eukaryota</taxon>
        <taxon>Viridiplantae</taxon>
        <taxon>Streptophyta</taxon>
        <taxon>Embryophyta</taxon>
        <taxon>Tracheophyta</taxon>
        <taxon>Spermatophyta</taxon>
        <taxon>Magnoliopsida</taxon>
        <taxon>Liliopsida</taxon>
        <taxon>Poales</taxon>
        <taxon>Poaceae</taxon>
        <taxon>BOP clade</taxon>
        <taxon>Oryzoideae</taxon>
        <taxon>Oryzeae</taxon>
        <taxon>Oryzinae</taxon>
        <taxon>Oryza</taxon>
        <taxon>Oryza sativa</taxon>
    </lineage>
</organism>
<accession>P0DO03</accession>
<accession>Q5W730</accession>
<keyword id="KW-0150">Chloroplast</keyword>
<keyword id="KW-0479">Metal-binding</keyword>
<keyword id="KW-0934">Plastid</keyword>
<keyword id="KW-1185">Reference proteome</keyword>
<keyword id="KW-0677">Repeat</keyword>
<keyword id="KW-0809">Transit peptide</keyword>
<keyword id="KW-0862">Zinc</keyword>
<keyword id="KW-0863">Zinc-finger</keyword>
<proteinExistence type="evidence at protein level"/>
<reference key="1">
    <citation type="journal article" date="2005" name="J. Plant Res.">
        <title>Interaction between proliferating cell nuclear antigen (PCNA) and a DnaJ induced by DNA damage.</title>
        <authorList>
            <person name="Yamamoto T."/>
            <person name="Mori Y."/>
            <person name="Ishibashi T."/>
            <person name="Uchiyama Y."/>
            <person name="Ueda T."/>
            <person name="Ando T."/>
            <person name="Hashimoto J."/>
            <person name="Kimura S."/>
            <person name="Sakaguchi K."/>
        </authorList>
    </citation>
    <scope>NUCLEOTIDE SEQUENCE [MRNA]</scope>
    <scope>INTERACTION WITH PCNA</scope>
    <scope>INDUCTION</scope>
</reference>
<reference key="2">
    <citation type="journal article" date="2005" name="Mol. Genet. Genomics">
        <title>A fine physical map of the rice chromosome 5.</title>
        <authorList>
            <person name="Cheng C.-H."/>
            <person name="Chung M.C."/>
            <person name="Liu S.-M."/>
            <person name="Chen S.-K."/>
            <person name="Kao F.Y."/>
            <person name="Lin S.-J."/>
            <person name="Hsiao S.-H."/>
            <person name="Tseng I.C."/>
            <person name="Hsing Y.-I.C."/>
            <person name="Wu H.-P."/>
            <person name="Chen C.-S."/>
            <person name="Shaw J.-F."/>
            <person name="Wu J."/>
            <person name="Matsumoto T."/>
            <person name="Sasaki T."/>
            <person name="Chen H.-C."/>
            <person name="Chow T.-Y."/>
        </authorList>
    </citation>
    <scope>NUCLEOTIDE SEQUENCE [LARGE SCALE GENOMIC DNA]</scope>
    <source>
        <strain>cv. Nipponbare</strain>
    </source>
</reference>
<reference key="3">
    <citation type="journal article" date="2005" name="Nature">
        <title>The map-based sequence of the rice genome.</title>
        <authorList>
            <consortium name="International rice genome sequencing project (IRGSP)"/>
        </authorList>
    </citation>
    <scope>NUCLEOTIDE SEQUENCE [LARGE SCALE GENOMIC DNA]</scope>
    <source>
        <strain>cv. Nipponbare</strain>
    </source>
</reference>
<reference key="4">
    <citation type="journal article" date="2008" name="Nucleic Acids Res.">
        <title>The rice annotation project database (RAP-DB): 2008 update.</title>
        <authorList>
            <consortium name="The rice annotation project (RAP)"/>
        </authorList>
    </citation>
    <scope>GENOME REANNOTATION</scope>
    <source>
        <strain>cv. Nipponbare</strain>
    </source>
</reference>
<reference key="5">
    <citation type="journal article" date="2013" name="Rice">
        <title>Improvement of the Oryza sativa Nipponbare reference genome using next generation sequence and optical map data.</title>
        <authorList>
            <person name="Kawahara Y."/>
            <person name="de la Bastide M."/>
            <person name="Hamilton J.P."/>
            <person name="Kanamori H."/>
            <person name="McCombie W.R."/>
            <person name="Ouyang S."/>
            <person name="Schwartz D.C."/>
            <person name="Tanaka T."/>
            <person name="Wu J."/>
            <person name="Zhou S."/>
            <person name="Childs K.L."/>
            <person name="Davidson R.M."/>
            <person name="Lin H."/>
            <person name="Quesada-Ocampo L."/>
            <person name="Vaillancourt B."/>
            <person name="Sakai H."/>
            <person name="Lee S.S."/>
            <person name="Kim J."/>
            <person name="Numa H."/>
            <person name="Itoh T."/>
            <person name="Buell C.R."/>
            <person name="Matsumoto T."/>
        </authorList>
    </citation>
    <scope>GENOME REANNOTATION</scope>
    <source>
        <strain>cv. Nipponbare</strain>
    </source>
</reference>
<reference key="6">
    <citation type="journal article" date="2013" name="Cell Stress Chaperones">
        <title>Functional relevance of J-protein family of rice (Oryza sativa).</title>
        <authorList>
            <person name="Sarkar N.K."/>
            <person name="Thapar U."/>
            <person name="Kundnani P."/>
            <person name="Panwar P."/>
            <person name="Grover A."/>
        </authorList>
    </citation>
    <scope>GENE FAMILY</scope>
    <scope>NOMENCLATURE</scope>
</reference>
<reference key="7">
    <citation type="journal article" date="2015" name="Gene">
        <title>The DnaJ OsDjA7/8 is essential for chloroplast development in rice (Oryza sativa).</title>
        <authorList>
            <person name="Zhu X."/>
            <person name="Liang S."/>
            <person name="Yin J."/>
            <person name="Yuan C."/>
            <person name="Wang J."/>
            <person name="Li W."/>
            <person name="He M."/>
            <person name="Wang J."/>
            <person name="Chen W."/>
            <person name="Ma B."/>
            <person name="Wang Y."/>
            <person name="Qin P."/>
            <person name="Li S."/>
            <person name="Chen X."/>
        </authorList>
    </citation>
    <scope>FUNCTION</scope>
    <scope>SUBCELLULAR LOCATION</scope>
    <scope>TISSUE SPECIFICITY</scope>
</reference>
<feature type="transit peptide" description="Chloroplast" evidence="2">
    <location>
        <begin position="1"/>
        <end position="86"/>
    </location>
</feature>
<feature type="chain" id="PRO_0000440259" description="Chaperone protein dnaJ A8, chloroplastic">
    <location>
        <begin position="87"/>
        <end position="447"/>
    </location>
</feature>
<feature type="domain" description="J" evidence="3">
    <location>
        <begin position="90"/>
        <end position="154"/>
    </location>
</feature>
<feature type="repeat" description="CXXCXGXG motif 1" evidence="8">
    <location>
        <begin position="230"/>
        <end position="237"/>
    </location>
</feature>
<feature type="repeat" description="CXXCXGXG motif 2" evidence="8">
    <location>
        <begin position="247"/>
        <end position="254"/>
    </location>
</feature>
<feature type="repeat" description="CXXCXGXG motif 3" evidence="8">
    <location>
        <begin position="273"/>
        <end position="280"/>
    </location>
</feature>
<feature type="repeat" description="CXXCXGXG motif 4" evidence="8">
    <location>
        <begin position="286"/>
        <end position="293"/>
    </location>
</feature>
<feature type="zinc finger region" description="CR-type" evidence="4">
    <location>
        <begin position="217"/>
        <end position="298"/>
    </location>
</feature>
<feature type="binding site" evidence="1">
    <location>
        <position position="230"/>
    </location>
    <ligand>
        <name>Zn(2+)</name>
        <dbReference type="ChEBI" id="CHEBI:29105"/>
        <label>1</label>
    </ligand>
</feature>
<feature type="binding site" evidence="1">
    <location>
        <position position="233"/>
    </location>
    <ligand>
        <name>Zn(2+)</name>
        <dbReference type="ChEBI" id="CHEBI:29105"/>
        <label>1</label>
    </ligand>
</feature>
<feature type="binding site" evidence="1">
    <location>
        <position position="247"/>
    </location>
    <ligand>
        <name>Zn(2+)</name>
        <dbReference type="ChEBI" id="CHEBI:29105"/>
        <label>2</label>
    </ligand>
</feature>
<feature type="binding site" evidence="1">
    <location>
        <position position="250"/>
    </location>
    <ligand>
        <name>Zn(2+)</name>
        <dbReference type="ChEBI" id="CHEBI:29105"/>
        <label>2</label>
    </ligand>
</feature>
<feature type="binding site" evidence="1">
    <location>
        <position position="273"/>
    </location>
    <ligand>
        <name>Zn(2+)</name>
        <dbReference type="ChEBI" id="CHEBI:29105"/>
        <label>2</label>
    </ligand>
</feature>
<feature type="binding site" evidence="1">
    <location>
        <position position="276"/>
    </location>
    <ligand>
        <name>Zn(2+)</name>
        <dbReference type="ChEBI" id="CHEBI:29105"/>
        <label>2</label>
    </ligand>
</feature>
<feature type="binding site" evidence="1">
    <location>
        <position position="286"/>
    </location>
    <ligand>
        <name>Zn(2+)</name>
        <dbReference type="ChEBI" id="CHEBI:29105"/>
        <label>1</label>
    </ligand>
</feature>
<feature type="binding site" evidence="1">
    <location>
        <position position="289"/>
    </location>
    <ligand>
        <name>Zn(2+)</name>
        <dbReference type="ChEBI" id="CHEBI:29105"/>
        <label>1</label>
    </ligand>
</feature>
<evidence type="ECO:0000250" key="1">
    <source>
        <dbReference type="UniProtKB" id="Q96EY1"/>
    </source>
</evidence>
<evidence type="ECO:0000255" key="2"/>
<evidence type="ECO:0000255" key="3">
    <source>
        <dbReference type="PROSITE-ProRule" id="PRU00286"/>
    </source>
</evidence>
<evidence type="ECO:0000255" key="4">
    <source>
        <dbReference type="PROSITE-ProRule" id="PRU00546"/>
    </source>
</evidence>
<evidence type="ECO:0000269" key="5">
    <source>
    </source>
</evidence>
<evidence type="ECO:0000269" key="6">
    <source>
    </source>
</evidence>
<evidence type="ECO:0000303" key="7">
    <source>
    </source>
</evidence>
<evidence type="ECO:0000305" key="8"/>
<evidence type="ECO:0000312" key="9">
    <source>
        <dbReference type="EMBL" id="AAV43842.1"/>
    </source>
</evidence>
<evidence type="ECO:0000312" key="10">
    <source>
        <dbReference type="EMBL" id="AAW57781.1"/>
    </source>
</evidence>
<evidence type="ECO:0000312" key="11">
    <source>
        <dbReference type="EMBL" id="BAS93446.1"/>
    </source>
</evidence>
<protein>
    <recommendedName>
        <fullName evidence="8">Chaperone protein dnaJ A8, chloroplastic</fullName>
        <shortName evidence="7">OsDjA8</shortName>
    </recommendedName>
</protein>
<dbReference type="EMBL" id="AB055405">
    <property type="protein sequence ID" value="BAB70509.1"/>
    <property type="status" value="ALT_FRAME"/>
    <property type="molecule type" value="mRNA"/>
</dbReference>
<dbReference type="EMBL" id="AC117264">
    <property type="protein sequence ID" value="AAV43842.1"/>
    <property type="molecule type" value="Genomic_DNA"/>
</dbReference>
<dbReference type="EMBL" id="AC144739">
    <property type="protein sequence ID" value="AAW57781.1"/>
    <property type="molecule type" value="Genomic_DNA"/>
</dbReference>
<dbReference type="EMBL" id="AP008211">
    <property type="protein sequence ID" value="BAF17144.1"/>
    <property type="molecule type" value="Genomic_DNA"/>
</dbReference>
<dbReference type="EMBL" id="AP014961">
    <property type="protein sequence ID" value="BAS93446.1"/>
    <property type="molecule type" value="Genomic_DNA"/>
</dbReference>
<dbReference type="RefSeq" id="XP_015639179.1">
    <property type="nucleotide sequence ID" value="XM_015783693.1"/>
</dbReference>
<dbReference type="SMR" id="P0DO03"/>
<dbReference type="FunCoup" id="P0DO03">
    <property type="interactions" value="305"/>
</dbReference>
<dbReference type="STRING" id="39947.P0DO03"/>
<dbReference type="PaxDb" id="39947-P0DO03"/>
<dbReference type="EnsemblPlants" id="Os05t0333500-01">
    <property type="protein sequence ID" value="Os05t0333500-01"/>
    <property type="gene ID" value="Os05g0333500"/>
</dbReference>
<dbReference type="EnsemblPlants" id="Os05t0333500-02">
    <property type="protein sequence ID" value="Os05t0333500-02"/>
    <property type="gene ID" value="Os05g0333500"/>
</dbReference>
<dbReference type="EnsemblPlants" id="Os05t0334000-01">
    <property type="protein sequence ID" value="Os05t0334000-01"/>
    <property type="gene ID" value="Os05g0334000"/>
</dbReference>
<dbReference type="EnsemblPlants" id="Os05t0334000-02">
    <property type="protein sequence ID" value="Os05t0334000-02"/>
    <property type="gene ID" value="Os05g0334000"/>
</dbReference>
<dbReference type="EnsemblPlants" id="Os05t0334400-01">
    <property type="protein sequence ID" value="Os05t0334400-01"/>
    <property type="gene ID" value="Os05g0334400"/>
</dbReference>
<dbReference type="GeneID" id="4338452"/>
<dbReference type="Gramene" id="Os05t0333500-01">
    <property type="protein sequence ID" value="Os05t0333500-01"/>
    <property type="gene ID" value="Os05g0333500"/>
</dbReference>
<dbReference type="Gramene" id="Os05t0333500-02">
    <property type="protein sequence ID" value="Os05t0333500-02"/>
    <property type="gene ID" value="Os05g0333500"/>
</dbReference>
<dbReference type="Gramene" id="Os05t0334000-01">
    <property type="protein sequence ID" value="Os05t0334000-01"/>
    <property type="gene ID" value="Os05g0334000"/>
</dbReference>
<dbReference type="Gramene" id="Os05t0334000-02">
    <property type="protein sequence ID" value="Os05t0334000-02"/>
    <property type="gene ID" value="Os05g0334000"/>
</dbReference>
<dbReference type="Gramene" id="Os05t0334400-01">
    <property type="protein sequence ID" value="Os05t0334400-01"/>
    <property type="gene ID" value="Os05g0334400"/>
</dbReference>
<dbReference type="KEGG" id="dosa:Os05g0334400"/>
<dbReference type="KEGG" id="osa:107275576"/>
<dbReference type="KEGG" id="osa:4338449"/>
<dbReference type="KEGG" id="osa:4338452"/>
<dbReference type="InParanoid" id="P0DO03"/>
<dbReference type="OMA" id="MATDYYA"/>
<dbReference type="OrthoDB" id="10256793at2759"/>
<dbReference type="Proteomes" id="UP000000763">
    <property type="component" value="Chromosome 5"/>
</dbReference>
<dbReference type="Proteomes" id="UP000059680">
    <property type="component" value="Chromosome 5"/>
</dbReference>
<dbReference type="ExpressionAtlas" id="P0DO03">
    <property type="expression patterns" value="baseline"/>
</dbReference>
<dbReference type="GO" id="GO:0009507">
    <property type="term" value="C:chloroplast"/>
    <property type="evidence" value="ECO:0007669"/>
    <property type="project" value="UniProtKB-SubCell"/>
</dbReference>
<dbReference type="GO" id="GO:0005783">
    <property type="term" value="C:endoplasmic reticulum"/>
    <property type="evidence" value="ECO:0007669"/>
    <property type="project" value="UniProtKB-ARBA"/>
</dbReference>
<dbReference type="GO" id="GO:0005524">
    <property type="term" value="F:ATP binding"/>
    <property type="evidence" value="ECO:0007669"/>
    <property type="project" value="InterPro"/>
</dbReference>
<dbReference type="GO" id="GO:0031072">
    <property type="term" value="F:heat shock protein binding"/>
    <property type="evidence" value="ECO:0007669"/>
    <property type="project" value="InterPro"/>
</dbReference>
<dbReference type="GO" id="GO:0051082">
    <property type="term" value="F:unfolded protein binding"/>
    <property type="evidence" value="ECO:0007669"/>
    <property type="project" value="InterPro"/>
</dbReference>
<dbReference type="GO" id="GO:0008270">
    <property type="term" value="F:zinc ion binding"/>
    <property type="evidence" value="ECO:0007669"/>
    <property type="project" value="UniProtKB-KW"/>
</dbReference>
<dbReference type="GO" id="GO:0006457">
    <property type="term" value="P:protein folding"/>
    <property type="evidence" value="ECO:0007669"/>
    <property type="project" value="InterPro"/>
</dbReference>
<dbReference type="GO" id="GO:0009408">
    <property type="term" value="P:response to heat"/>
    <property type="evidence" value="ECO:0007669"/>
    <property type="project" value="InterPro"/>
</dbReference>
<dbReference type="CDD" id="cd06257">
    <property type="entry name" value="DnaJ"/>
    <property type="match status" value="1"/>
</dbReference>
<dbReference type="CDD" id="cd10747">
    <property type="entry name" value="DnaJ_C"/>
    <property type="match status" value="1"/>
</dbReference>
<dbReference type="CDD" id="cd10719">
    <property type="entry name" value="DnaJ_zf"/>
    <property type="match status" value="1"/>
</dbReference>
<dbReference type="FunFam" id="2.60.260.20:FF:000005">
    <property type="entry name" value="Chaperone protein dnaJ 1, mitochondrial"/>
    <property type="match status" value="1"/>
</dbReference>
<dbReference type="FunFam" id="1.10.287.110:FF:000037">
    <property type="entry name" value="Chaperone protein dnaJ A6 chloroplastic"/>
    <property type="match status" value="1"/>
</dbReference>
<dbReference type="FunFam" id="2.10.230.10:FF:000006">
    <property type="entry name" value="Chaperone protein dnaJ A6 chloroplastic"/>
    <property type="match status" value="1"/>
</dbReference>
<dbReference type="FunFam" id="2.60.260.20:FF:000009">
    <property type="entry name" value="Putative Mitochondrial DnaJ chaperone"/>
    <property type="match status" value="1"/>
</dbReference>
<dbReference type="Gene3D" id="1.10.287.110">
    <property type="entry name" value="DnaJ domain"/>
    <property type="match status" value="1"/>
</dbReference>
<dbReference type="Gene3D" id="2.10.230.10">
    <property type="entry name" value="Heat shock protein DnaJ, cysteine-rich domain"/>
    <property type="match status" value="1"/>
</dbReference>
<dbReference type="Gene3D" id="2.60.260.20">
    <property type="entry name" value="Urease metallochaperone UreE, N-terminal domain"/>
    <property type="match status" value="2"/>
</dbReference>
<dbReference type="HAMAP" id="MF_01152">
    <property type="entry name" value="DnaJ"/>
    <property type="match status" value="1"/>
</dbReference>
<dbReference type="InterPro" id="IPR012724">
    <property type="entry name" value="DnaJ"/>
</dbReference>
<dbReference type="InterPro" id="IPR002939">
    <property type="entry name" value="DnaJ_C"/>
</dbReference>
<dbReference type="InterPro" id="IPR001623">
    <property type="entry name" value="DnaJ_domain"/>
</dbReference>
<dbReference type="InterPro" id="IPR018253">
    <property type="entry name" value="DnaJ_domain_CS"/>
</dbReference>
<dbReference type="InterPro" id="IPR008971">
    <property type="entry name" value="HSP40/DnaJ_pept-bd"/>
</dbReference>
<dbReference type="InterPro" id="IPR001305">
    <property type="entry name" value="HSP_DnaJ_Cys-rich_dom"/>
</dbReference>
<dbReference type="InterPro" id="IPR036410">
    <property type="entry name" value="HSP_DnaJ_Cys-rich_dom_sf"/>
</dbReference>
<dbReference type="InterPro" id="IPR036869">
    <property type="entry name" value="J_dom_sf"/>
</dbReference>
<dbReference type="NCBIfam" id="TIGR02349">
    <property type="entry name" value="DnaJ_bact"/>
    <property type="match status" value="1"/>
</dbReference>
<dbReference type="NCBIfam" id="NF008035">
    <property type="entry name" value="PRK10767.1"/>
    <property type="match status" value="1"/>
</dbReference>
<dbReference type="PANTHER" id="PTHR43096:SF10">
    <property type="entry name" value="CHAPERONE PROTEIN DNAJ A6, CHLOROPLASTIC"/>
    <property type="match status" value="1"/>
</dbReference>
<dbReference type="PANTHER" id="PTHR43096">
    <property type="entry name" value="DNAJ HOMOLOG 1, MITOCHONDRIAL-RELATED"/>
    <property type="match status" value="1"/>
</dbReference>
<dbReference type="Pfam" id="PF00226">
    <property type="entry name" value="DnaJ"/>
    <property type="match status" value="1"/>
</dbReference>
<dbReference type="Pfam" id="PF01556">
    <property type="entry name" value="DnaJ_C"/>
    <property type="match status" value="1"/>
</dbReference>
<dbReference type="Pfam" id="PF00684">
    <property type="entry name" value="DnaJ_CXXCXGXG"/>
    <property type="match status" value="1"/>
</dbReference>
<dbReference type="PRINTS" id="PR00625">
    <property type="entry name" value="JDOMAIN"/>
</dbReference>
<dbReference type="SMART" id="SM00271">
    <property type="entry name" value="DnaJ"/>
    <property type="match status" value="1"/>
</dbReference>
<dbReference type="SUPFAM" id="SSF46565">
    <property type="entry name" value="Chaperone J-domain"/>
    <property type="match status" value="1"/>
</dbReference>
<dbReference type="SUPFAM" id="SSF57938">
    <property type="entry name" value="DnaJ/Hsp40 cysteine-rich domain"/>
    <property type="match status" value="1"/>
</dbReference>
<dbReference type="SUPFAM" id="SSF49493">
    <property type="entry name" value="HSP40/DnaJ peptide-binding domain"/>
    <property type="match status" value="2"/>
</dbReference>
<dbReference type="PROSITE" id="PS00636">
    <property type="entry name" value="DNAJ_1"/>
    <property type="match status" value="1"/>
</dbReference>
<dbReference type="PROSITE" id="PS50076">
    <property type="entry name" value="DNAJ_2"/>
    <property type="match status" value="1"/>
</dbReference>
<dbReference type="PROSITE" id="PS51188">
    <property type="entry name" value="ZF_CR"/>
    <property type="match status" value="1"/>
</dbReference>
<sequence>MALLQFGGTLAPKLGEKPQLLPRSPALTRVIYADPRFLVSKSGSGGRLKHLVSPTASLQSRTSSRLFNHAPSPRFRHRRSSRFIVRADADFYSTLGVSRNASKSEIKSAYRKLARSYHPDVNKDPGAEQKFKDISNAYEVLSDDEKRSIYDKYGEAGLKGAGMGTGDYSNPFDLFESLFEGFGGMGGMGGRAARNRPMQGDDEAYNLVLNFKEAVFGVEKEIEITRLEGCNTCDGTGAKPGTKPTTCKTCGGQGQVVSSTRTPLGIFQQVSTCNTCGGTGEFSTPCNTCGGDGRVRKTKRISLKVPAGVDSGSRLRVRSEGNAGRRGGPPGDLYVFIDVLSDPVLKRDGTNILYTCKVSYIDAILGTTVKVPTVDGMVDLKIPSGTQPGTTLVMSKKGVPLLGKSNARGDQLVRVQVEIPKRLSSDERKLIEELANLNKAQTANSRR</sequence>
<name>DJA8_ORYSJ</name>
<gene>
    <name evidence="7" type="primary">DJA8</name>
    <name evidence="11" type="ordered locus">Os05g0334400</name>
    <name evidence="8" type="ordered locus">LOC_Os05g26926</name>
    <name evidence="9" type="ORF">OJ1005_D04.18</name>
    <name evidence="10" type="ORF">OSJNBa0049D13.4</name>
</gene>
<comment type="function">
    <text evidence="6">Plays pivotal roles in chloroplast development. Is essential for the regulation of chloroplast development and differentiation.</text>
</comment>
<comment type="subunit">
    <text evidence="5">Interacts with PCNA.</text>
</comment>
<comment type="subcellular location">
    <subcellularLocation>
        <location evidence="6">Plastid</location>
        <location evidence="6">Chloroplast</location>
    </subcellularLocation>
</comment>
<comment type="tissue specificity">
    <text evidence="6">Expressed in roots, stems, leaves and panicles.</text>
</comment>
<comment type="induction">
    <text evidence="5">Induced by UV and hydrogen peroxide. Down-regulated during sucrose starvation. Transiently down-regulated by heat shock.</text>
</comment>
<comment type="miscellaneous">
    <text evidence="6">Plants silencing DJA7 exhibit albino lethal phenotypes, display abnormal cellular structures, organelles and chloroplasts, and strong reduction of the expression of CAB1R, CAB2R, PsaA and PsbA genes, tightly associated with chloroplast development.</text>
</comment>
<comment type="similarity">
    <text evidence="8">Belongs to the DnaJ family.</text>
</comment>
<comment type="sequence caution" evidence="8">
    <conflict type="frameshift">
        <sequence resource="EMBL-CDS" id="BAB70509"/>
    </conflict>
</comment>